<comment type="function">
    <text evidence="1">Nucleotidase that shows phosphatase activity on nucleoside 5'-monophosphates.</text>
</comment>
<comment type="catalytic activity">
    <reaction evidence="1">
        <text>a ribonucleoside 5'-phosphate + H2O = a ribonucleoside + phosphate</text>
        <dbReference type="Rhea" id="RHEA:12484"/>
        <dbReference type="ChEBI" id="CHEBI:15377"/>
        <dbReference type="ChEBI" id="CHEBI:18254"/>
        <dbReference type="ChEBI" id="CHEBI:43474"/>
        <dbReference type="ChEBI" id="CHEBI:58043"/>
        <dbReference type="EC" id="3.1.3.5"/>
    </reaction>
</comment>
<comment type="cofactor">
    <cofactor evidence="1">
        <name>a divalent metal cation</name>
        <dbReference type="ChEBI" id="CHEBI:60240"/>
    </cofactor>
    <text evidence="1">Binds 1 divalent metal cation per subunit.</text>
</comment>
<comment type="subcellular location">
    <subcellularLocation>
        <location evidence="1">Cytoplasm</location>
    </subcellularLocation>
</comment>
<comment type="similarity">
    <text evidence="1">Belongs to the SurE nucleotidase family.</text>
</comment>
<reference key="1">
    <citation type="journal article" date="2009" name="J. Bacteriol.">
        <title>Complete genome sequence of Erythrobacter litoralis HTCC2594.</title>
        <authorList>
            <person name="Oh H.M."/>
            <person name="Giovannoni S.J."/>
            <person name="Ferriera S."/>
            <person name="Johnson J."/>
            <person name="Cho J.C."/>
        </authorList>
    </citation>
    <scope>NUCLEOTIDE SEQUENCE [LARGE SCALE GENOMIC DNA]</scope>
    <source>
        <strain>HTCC2594</strain>
    </source>
</reference>
<accession>Q2NDM8</accession>
<gene>
    <name evidence="1" type="primary">surE</name>
    <name type="ordered locus">ELI_00605</name>
</gene>
<dbReference type="EC" id="3.1.3.5" evidence="1"/>
<dbReference type="EMBL" id="CP000157">
    <property type="protein sequence ID" value="ABC62213.1"/>
    <property type="molecule type" value="Genomic_DNA"/>
</dbReference>
<dbReference type="RefSeq" id="WP_011413091.1">
    <property type="nucleotide sequence ID" value="NC_007722.1"/>
</dbReference>
<dbReference type="SMR" id="Q2NDM8"/>
<dbReference type="STRING" id="314225.ELI_00605"/>
<dbReference type="KEGG" id="eli:ELI_00605"/>
<dbReference type="eggNOG" id="COG0496">
    <property type="taxonomic scope" value="Bacteria"/>
</dbReference>
<dbReference type="HOGENOM" id="CLU_045192_1_2_5"/>
<dbReference type="OrthoDB" id="9780815at2"/>
<dbReference type="Proteomes" id="UP000008808">
    <property type="component" value="Chromosome"/>
</dbReference>
<dbReference type="GO" id="GO:0005737">
    <property type="term" value="C:cytoplasm"/>
    <property type="evidence" value="ECO:0007669"/>
    <property type="project" value="UniProtKB-SubCell"/>
</dbReference>
<dbReference type="GO" id="GO:0008254">
    <property type="term" value="F:3'-nucleotidase activity"/>
    <property type="evidence" value="ECO:0007669"/>
    <property type="project" value="TreeGrafter"/>
</dbReference>
<dbReference type="GO" id="GO:0008253">
    <property type="term" value="F:5'-nucleotidase activity"/>
    <property type="evidence" value="ECO:0007669"/>
    <property type="project" value="UniProtKB-UniRule"/>
</dbReference>
<dbReference type="GO" id="GO:0004309">
    <property type="term" value="F:exopolyphosphatase activity"/>
    <property type="evidence" value="ECO:0007669"/>
    <property type="project" value="TreeGrafter"/>
</dbReference>
<dbReference type="GO" id="GO:0046872">
    <property type="term" value="F:metal ion binding"/>
    <property type="evidence" value="ECO:0007669"/>
    <property type="project" value="UniProtKB-UniRule"/>
</dbReference>
<dbReference type="GO" id="GO:0000166">
    <property type="term" value="F:nucleotide binding"/>
    <property type="evidence" value="ECO:0007669"/>
    <property type="project" value="UniProtKB-KW"/>
</dbReference>
<dbReference type="FunFam" id="3.40.1210.10:FF:000001">
    <property type="entry name" value="5'/3'-nucleotidase SurE"/>
    <property type="match status" value="1"/>
</dbReference>
<dbReference type="Gene3D" id="3.40.1210.10">
    <property type="entry name" value="Survival protein SurE-like phosphatase/nucleotidase"/>
    <property type="match status" value="1"/>
</dbReference>
<dbReference type="HAMAP" id="MF_00060">
    <property type="entry name" value="SurE"/>
    <property type="match status" value="1"/>
</dbReference>
<dbReference type="InterPro" id="IPR030048">
    <property type="entry name" value="SurE"/>
</dbReference>
<dbReference type="InterPro" id="IPR002828">
    <property type="entry name" value="SurE-like_Pase/nucleotidase"/>
</dbReference>
<dbReference type="InterPro" id="IPR036523">
    <property type="entry name" value="SurE-like_sf"/>
</dbReference>
<dbReference type="NCBIfam" id="NF001490">
    <property type="entry name" value="PRK00346.1-4"/>
    <property type="match status" value="1"/>
</dbReference>
<dbReference type="NCBIfam" id="TIGR00087">
    <property type="entry name" value="surE"/>
    <property type="match status" value="1"/>
</dbReference>
<dbReference type="PANTHER" id="PTHR30457">
    <property type="entry name" value="5'-NUCLEOTIDASE SURE"/>
    <property type="match status" value="1"/>
</dbReference>
<dbReference type="PANTHER" id="PTHR30457:SF12">
    <property type="entry name" value="5'_3'-NUCLEOTIDASE SURE"/>
    <property type="match status" value="1"/>
</dbReference>
<dbReference type="Pfam" id="PF01975">
    <property type="entry name" value="SurE"/>
    <property type="match status" value="1"/>
</dbReference>
<dbReference type="SUPFAM" id="SSF64167">
    <property type="entry name" value="SurE-like"/>
    <property type="match status" value="1"/>
</dbReference>
<evidence type="ECO:0000255" key="1">
    <source>
        <dbReference type="HAMAP-Rule" id="MF_00060"/>
    </source>
</evidence>
<feature type="chain" id="PRO_1000007731" description="5'-nucleotidase SurE">
    <location>
        <begin position="1"/>
        <end position="252"/>
    </location>
</feature>
<feature type="binding site" evidence="1">
    <location>
        <position position="8"/>
    </location>
    <ligand>
        <name>a divalent metal cation</name>
        <dbReference type="ChEBI" id="CHEBI:60240"/>
    </ligand>
</feature>
<feature type="binding site" evidence="1">
    <location>
        <position position="9"/>
    </location>
    <ligand>
        <name>a divalent metal cation</name>
        <dbReference type="ChEBI" id="CHEBI:60240"/>
    </ligand>
</feature>
<feature type="binding site" evidence="1">
    <location>
        <position position="40"/>
    </location>
    <ligand>
        <name>a divalent metal cation</name>
        <dbReference type="ChEBI" id="CHEBI:60240"/>
    </ligand>
</feature>
<feature type="binding site" evidence="1">
    <location>
        <position position="93"/>
    </location>
    <ligand>
        <name>a divalent metal cation</name>
        <dbReference type="ChEBI" id="CHEBI:60240"/>
    </ligand>
</feature>
<proteinExistence type="inferred from homology"/>
<sequence length="252" mass="27750">MRILLTNDDGIHAPGFEVLEDIARELSDEIWVCAPAEEQSGAGHSLTLHHPVRLRQLGERRYSVTGTPTDSVMLALRTVLEDKQPDLILSGVNRGANLGDDITYSGTASAAMEGALGGIKSIALSQVYKRDAEHELFDAARTYGADVIRKLIDAPFGDRTLININFPPLPADKVRGIRAVRQGFHDYSRGSVVKGRDPRGLEYYWFGLYAIEHTLDHGTDLEAIDEGFVSVTPLQLDLTQHSLLSVIGERFE</sequence>
<protein>
    <recommendedName>
        <fullName evidence="1">5'-nucleotidase SurE</fullName>
        <ecNumber evidence="1">3.1.3.5</ecNumber>
    </recommendedName>
    <alternativeName>
        <fullName evidence="1">Nucleoside 5'-monophosphate phosphohydrolase</fullName>
    </alternativeName>
</protein>
<organism>
    <name type="scientific">Erythrobacter litoralis (strain HTCC2594)</name>
    <dbReference type="NCBI Taxonomy" id="314225"/>
    <lineage>
        <taxon>Bacteria</taxon>
        <taxon>Pseudomonadati</taxon>
        <taxon>Pseudomonadota</taxon>
        <taxon>Alphaproteobacteria</taxon>
        <taxon>Sphingomonadales</taxon>
        <taxon>Erythrobacteraceae</taxon>
        <taxon>Erythrobacter/Porphyrobacter group</taxon>
        <taxon>Erythrobacter</taxon>
    </lineage>
</organism>
<name>SURE_ERYLH</name>
<keyword id="KW-0963">Cytoplasm</keyword>
<keyword id="KW-0378">Hydrolase</keyword>
<keyword id="KW-0479">Metal-binding</keyword>
<keyword id="KW-0547">Nucleotide-binding</keyword>
<keyword id="KW-1185">Reference proteome</keyword>